<sequence length="312" mass="34114">MTQSTPIRIATRKSPLALWQAHFVKDALQAAHPGLEVELVTMVTKGDVILDTPLAKVGGKGLFVKELEVAMLEGRADLAVHSMKDVPVDFPEGLGLVTICEREDPRDAFVSNTYSNINELPQGAVVGTCSLRRQCQLKEYRPDIIIKELRGNVGTRLGKLDAGEYDAIILAAAGLKRLKLEDRIRSFIEPEQSLPAVGQGAVGIECRVDDERLLKLLEPLNHKDTADRVLCERAMNLTLEGGCQVPIGSYALLEGDEIWLRALVGEPDGSEIVRGEVRGHRKDGEALGIQLANELLDSGARDILTKLYADHD</sequence>
<comment type="function">
    <text evidence="1">Tetrapolymerization of the monopyrrole PBG into the hydroxymethylbilane pre-uroporphyrinogen in several discrete steps.</text>
</comment>
<comment type="catalytic activity">
    <reaction evidence="1">
        <text>4 porphobilinogen + H2O = hydroxymethylbilane + 4 NH4(+)</text>
        <dbReference type="Rhea" id="RHEA:13185"/>
        <dbReference type="ChEBI" id="CHEBI:15377"/>
        <dbReference type="ChEBI" id="CHEBI:28938"/>
        <dbReference type="ChEBI" id="CHEBI:57845"/>
        <dbReference type="ChEBI" id="CHEBI:58126"/>
        <dbReference type="EC" id="2.5.1.61"/>
    </reaction>
</comment>
<comment type="cofactor">
    <cofactor evidence="1">
        <name>dipyrromethane</name>
        <dbReference type="ChEBI" id="CHEBI:60342"/>
    </cofactor>
    <text evidence="1">Binds 1 dipyrromethane group covalently.</text>
</comment>
<comment type="pathway">
    <text evidence="1">Porphyrin-containing compound metabolism; protoporphyrin-IX biosynthesis; coproporphyrinogen-III from 5-aminolevulinate: step 2/4.</text>
</comment>
<comment type="subunit">
    <text evidence="1">Monomer.</text>
</comment>
<comment type="miscellaneous">
    <text evidence="1">The porphobilinogen subunits are added to the dipyrromethane group.</text>
</comment>
<comment type="similarity">
    <text evidence="1">Belongs to the HMBS family.</text>
</comment>
<evidence type="ECO:0000255" key="1">
    <source>
        <dbReference type="HAMAP-Rule" id="MF_00260"/>
    </source>
</evidence>
<reference key="1">
    <citation type="journal article" date="2003" name="Lancet">
        <title>Genome sequence of Vibrio parahaemolyticus: a pathogenic mechanism distinct from that of V. cholerae.</title>
        <authorList>
            <person name="Makino K."/>
            <person name="Oshima K."/>
            <person name="Kurokawa K."/>
            <person name="Yokoyama K."/>
            <person name="Uda T."/>
            <person name="Tagomori K."/>
            <person name="Iijima Y."/>
            <person name="Najima M."/>
            <person name="Nakano M."/>
            <person name="Yamashita A."/>
            <person name="Kubota Y."/>
            <person name="Kimura S."/>
            <person name="Yasunaga T."/>
            <person name="Honda T."/>
            <person name="Shinagawa H."/>
            <person name="Hattori M."/>
            <person name="Iida T."/>
        </authorList>
    </citation>
    <scope>NUCLEOTIDE SEQUENCE [LARGE SCALE GENOMIC DNA]</scope>
    <source>
        <strain>RIMD 2210633</strain>
    </source>
</reference>
<accession>Q87KI9</accession>
<proteinExistence type="inferred from homology"/>
<name>HEM3_VIBPA</name>
<protein>
    <recommendedName>
        <fullName evidence="1">Porphobilinogen deaminase</fullName>
        <shortName evidence="1">PBG</shortName>
        <ecNumber evidence="1">2.5.1.61</ecNumber>
    </recommendedName>
    <alternativeName>
        <fullName evidence="1">Hydroxymethylbilane synthase</fullName>
        <shortName evidence="1">HMBS</shortName>
    </alternativeName>
    <alternativeName>
        <fullName evidence="1">Pre-uroporphyrinogen synthase</fullName>
    </alternativeName>
</protein>
<keyword id="KW-0627">Porphyrin biosynthesis</keyword>
<keyword id="KW-0808">Transferase</keyword>
<organism>
    <name type="scientific">Vibrio parahaemolyticus serotype O3:K6 (strain RIMD 2210633)</name>
    <dbReference type="NCBI Taxonomy" id="223926"/>
    <lineage>
        <taxon>Bacteria</taxon>
        <taxon>Pseudomonadati</taxon>
        <taxon>Pseudomonadota</taxon>
        <taxon>Gammaproteobacteria</taxon>
        <taxon>Vibrionales</taxon>
        <taxon>Vibrionaceae</taxon>
        <taxon>Vibrio</taxon>
    </lineage>
</organism>
<gene>
    <name evidence="1" type="primary">hemC</name>
    <name type="ordered locus">VP2988</name>
</gene>
<dbReference type="EC" id="2.5.1.61" evidence="1"/>
<dbReference type="EMBL" id="BA000031">
    <property type="protein sequence ID" value="BAC61251.1"/>
    <property type="molecule type" value="Genomic_DNA"/>
</dbReference>
<dbReference type="RefSeq" id="NP_799367.1">
    <property type="nucleotide sequence ID" value="NC_004603.1"/>
</dbReference>
<dbReference type="RefSeq" id="WP_005459122.1">
    <property type="nucleotide sequence ID" value="NC_004603.1"/>
</dbReference>
<dbReference type="SMR" id="Q87KI9"/>
<dbReference type="GeneID" id="1190574"/>
<dbReference type="KEGG" id="vpa:VP2988"/>
<dbReference type="PATRIC" id="fig|223926.6.peg.2876"/>
<dbReference type="eggNOG" id="COG0181">
    <property type="taxonomic scope" value="Bacteria"/>
</dbReference>
<dbReference type="HOGENOM" id="CLU_019704_0_2_6"/>
<dbReference type="UniPathway" id="UPA00251">
    <property type="reaction ID" value="UER00319"/>
</dbReference>
<dbReference type="Proteomes" id="UP000002493">
    <property type="component" value="Chromosome 1"/>
</dbReference>
<dbReference type="GO" id="GO:0005737">
    <property type="term" value="C:cytoplasm"/>
    <property type="evidence" value="ECO:0007669"/>
    <property type="project" value="TreeGrafter"/>
</dbReference>
<dbReference type="GO" id="GO:0004418">
    <property type="term" value="F:hydroxymethylbilane synthase activity"/>
    <property type="evidence" value="ECO:0007669"/>
    <property type="project" value="UniProtKB-UniRule"/>
</dbReference>
<dbReference type="GO" id="GO:0006782">
    <property type="term" value="P:protoporphyrinogen IX biosynthetic process"/>
    <property type="evidence" value="ECO:0007669"/>
    <property type="project" value="UniProtKB-UniRule"/>
</dbReference>
<dbReference type="CDD" id="cd13646">
    <property type="entry name" value="PBP2_EcHMBS_like"/>
    <property type="match status" value="1"/>
</dbReference>
<dbReference type="FunFam" id="3.30.160.40:FF:000002">
    <property type="entry name" value="Porphobilinogen deaminase"/>
    <property type="match status" value="1"/>
</dbReference>
<dbReference type="FunFam" id="3.40.190.10:FF:000004">
    <property type="entry name" value="Porphobilinogen deaminase"/>
    <property type="match status" value="1"/>
</dbReference>
<dbReference type="FunFam" id="3.40.190.10:FF:000005">
    <property type="entry name" value="Porphobilinogen deaminase"/>
    <property type="match status" value="1"/>
</dbReference>
<dbReference type="Gene3D" id="3.40.190.10">
    <property type="entry name" value="Periplasmic binding protein-like II"/>
    <property type="match status" value="2"/>
</dbReference>
<dbReference type="Gene3D" id="3.30.160.40">
    <property type="entry name" value="Porphobilinogen deaminase, C-terminal domain"/>
    <property type="match status" value="1"/>
</dbReference>
<dbReference type="HAMAP" id="MF_00260">
    <property type="entry name" value="Porphobil_deam"/>
    <property type="match status" value="1"/>
</dbReference>
<dbReference type="InterPro" id="IPR000860">
    <property type="entry name" value="HemC"/>
</dbReference>
<dbReference type="InterPro" id="IPR022419">
    <property type="entry name" value="Porphobilin_deaminase_cofac_BS"/>
</dbReference>
<dbReference type="InterPro" id="IPR022417">
    <property type="entry name" value="Porphobilin_deaminase_N"/>
</dbReference>
<dbReference type="InterPro" id="IPR022418">
    <property type="entry name" value="Porphobilinogen_deaminase_C"/>
</dbReference>
<dbReference type="InterPro" id="IPR036803">
    <property type="entry name" value="Porphobilinogen_deaminase_C_sf"/>
</dbReference>
<dbReference type="NCBIfam" id="TIGR00212">
    <property type="entry name" value="hemC"/>
    <property type="match status" value="1"/>
</dbReference>
<dbReference type="PANTHER" id="PTHR11557">
    <property type="entry name" value="PORPHOBILINOGEN DEAMINASE"/>
    <property type="match status" value="1"/>
</dbReference>
<dbReference type="PANTHER" id="PTHR11557:SF0">
    <property type="entry name" value="PORPHOBILINOGEN DEAMINASE"/>
    <property type="match status" value="1"/>
</dbReference>
<dbReference type="Pfam" id="PF01379">
    <property type="entry name" value="Porphobil_deam"/>
    <property type="match status" value="1"/>
</dbReference>
<dbReference type="Pfam" id="PF03900">
    <property type="entry name" value="Porphobil_deamC"/>
    <property type="match status" value="1"/>
</dbReference>
<dbReference type="PIRSF" id="PIRSF001438">
    <property type="entry name" value="4pyrrol_synth_OHMeBilane_synth"/>
    <property type="match status" value="1"/>
</dbReference>
<dbReference type="PRINTS" id="PR00151">
    <property type="entry name" value="PORPHBDMNASE"/>
</dbReference>
<dbReference type="SUPFAM" id="SSF53850">
    <property type="entry name" value="Periplasmic binding protein-like II"/>
    <property type="match status" value="1"/>
</dbReference>
<dbReference type="SUPFAM" id="SSF54782">
    <property type="entry name" value="Porphobilinogen deaminase (hydroxymethylbilane synthase), C-terminal domain"/>
    <property type="match status" value="1"/>
</dbReference>
<dbReference type="PROSITE" id="PS00533">
    <property type="entry name" value="PORPHOBILINOGEN_DEAM"/>
    <property type="match status" value="1"/>
</dbReference>
<feature type="chain" id="PRO_0000143006" description="Porphobilinogen deaminase">
    <location>
        <begin position="1"/>
        <end position="312"/>
    </location>
</feature>
<feature type="modified residue" description="S-(dipyrrolylmethanemethyl)cysteine" evidence="1">
    <location>
        <position position="243"/>
    </location>
</feature>